<evidence type="ECO:0000255" key="1"/>
<evidence type="ECO:0000256" key="2">
    <source>
        <dbReference type="SAM" id="MobiDB-lite"/>
    </source>
</evidence>
<evidence type="ECO:0000269" key="3">
    <source>
    </source>
</evidence>
<evidence type="ECO:0000269" key="4">
    <source>
    </source>
</evidence>
<evidence type="ECO:0000269" key="5">
    <source>
    </source>
</evidence>
<evidence type="ECO:0000303" key="6">
    <source>
    </source>
</evidence>
<evidence type="ECO:0000305" key="7"/>
<feature type="chain" id="PRO_0000295856" description="Tumor protein D55">
    <location>
        <begin position="1"/>
        <end position="140"/>
    </location>
</feature>
<feature type="region of interest" description="Disordered" evidence="2">
    <location>
        <begin position="1"/>
        <end position="28"/>
    </location>
</feature>
<feature type="coiled-coil region" evidence="1">
    <location>
        <begin position="28"/>
        <end position="57"/>
    </location>
</feature>
<feature type="compositionally biased region" description="Polar residues" evidence="2">
    <location>
        <begin position="7"/>
        <end position="18"/>
    </location>
</feature>
<feature type="splice variant" id="VSP_027113" description="In isoform 3." evidence="6">
    <original>LMGTIKSKVSGGKRAWP</original>
    <variation>NPKGEGSRI</variation>
    <location>
        <begin position="124"/>
        <end position="140"/>
    </location>
</feature>
<feature type="splice variant" id="VSP_027114" description="In isoform 2." evidence="6">
    <original>MGTIKSKVSGGKRAWP</original>
    <variation>IFNKYTLNQGRN</variation>
    <location>
        <begin position="125"/>
        <end position="140"/>
    </location>
</feature>
<feature type="sequence variant" id="VAR_033372" description="In dbSNP:rs3847262." evidence="3 4 5">
    <original>F</original>
    <variation>L</variation>
    <location>
        <position position="118"/>
    </location>
</feature>
<feature type="sequence conflict" description="In Ref. 2; BAB71505." evidence="7" ref="2">
    <original>L</original>
    <variation>P</variation>
    <location>
        <position position="109"/>
    </location>
</feature>
<reference key="1">
    <citation type="journal article" date="2006" name="Biochem. Biophys. Res. Commun.">
        <title>A testis-specific and testis developmentally regulated tumor protein D52 (TPD52)-like protein TPD52L3/hD55 interacts with TPD52 family proteins.</title>
        <authorList>
            <person name="Cao Q."/>
            <person name="Chen J."/>
            <person name="Zhu L."/>
            <person name="Liu Y."/>
            <person name="Zhou Z."/>
            <person name="Sha J."/>
            <person name="Wang S."/>
            <person name="Li J."/>
        </authorList>
    </citation>
    <scope>NUCLEOTIDE SEQUENCE [MRNA] (ISOFORM 1)</scope>
    <scope>INTERACTION WITH TPD52L2</scope>
    <scope>TISSUE SPECIFICITY</scope>
    <scope>VARIANT LEU-118</scope>
    <source>
        <tissue>Testis</tissue>
    </source>
</reference>
<reference key="2">
    <citation type="journal article" date="2004" name="Nat. Genet.">
        <title>Complete sequencing and characterization of 21,243 full-length human cDNAs.</title>
        <authorList>
            <person name="Ota T."/>
            <person name="Suzuki Y."/>
            <person name="Nishikawa T."/>
            <person name="Otsuki T."/>
            <person name="Sugiyama T."/>
            <person name="Irie R."/>
            <person name="Wakamatsu A."/>
            <person name="Hayashi K."/>
            <person name="Sato H."/>
            <person name="Nagai K."/>
            <person name="Kimura K."/>
            <person name="Makita H."/>
            <person name="Sekine M."/>
            <person name="Obayashi M."/>
            <person name="Nishi T."/>
            <person name="Shibahara T."/>
            <person name="Tanaka T."/>
            <person name="Ishii S."/>
            <person name="Yamamoto J."/>
            <person name="Saito K."/>
            <person name="Kawai Y."/>
            <person name="Isono Y."/>
            <person name="Nakamura Y."/>
            <person name="Nagahari K."/>
            <person name="Murakami K."/>
            <person name="Yasuda T."/>
            <person name="Iwayanagi T."/>
            <person name="Wagatsuma M."/>
            <person name="Shiratori A."/>
            <person name="Sudo H."/>
            <person name="Hosoiri T."/>
            <person name="Kaku Y."/>
            <person name="Kodaira H."/>
            <person name="Kondo H."/>
            <person name="Sugawara M."/>
            <person name="Takahashi M."/>
            <person name="Kanda K."/>
            <person name="Yokoi T."/>
            <person name="Furuya T."/>
            <person name="Kikkawa E."/>
            <person name="Omura Y."/>
            <person name="Abe K."/>
            <person name="Kamihara K."/>
            <person name="Katsuta N."/>
            <person name="Sato K."/>
            <person name="Tanikawa M."/>
            <person name="Yamazaki M."/>
            <person name="Ninomiya K."/>
            <person name="Ishibashi T."/>
            <person name="Yamashita H."/>
            <person name="Murakawa K."/>
            <person name="Fujimori K."/>
            <person name="Tanai H."/>
            <person name="Kimata M."/>
            <person name="Watanabe M."/>
            <person name="Hiraoka S."/>
            <person name="Chiba Y."/>
            <person name="Ishida S."/>
            <person name="Ono Y."/>
            <person name="Takiguchi S."/>
            <person name="Watanabe S."/>
            <person name="Yosida M."/>
            <person name="Hotuta T."/>
            <person name="Kusano J."/>
            <person name="Kanehori K."/>
            <person name="Takahashi-Fujii A."/>
            <person name="Hara H."/>
            <person name="Tanase T.-O."/>
            <person name="Nomura Y."/>
            <person name="Togiya S."/>
            <person name="Komai F."/>
            <person name="Hara R."/>
            <person name="Takeuchi K."/>
            <person name="Arita M."/>
            <person name="Imose N."/>
            <person name="Musashino K."/>
            <person name="Yuuki H."/>
            <person name="Oshima A."/>
            <person name="Sasaki N."/>
            <person name="Aotsuka S."/>
            <person name="Yoshikawa Y."/>
            <person name="Matsunawa H."/>
            <person name="Ichihara T."/>
            <person name="Shiohata N."/>
            <person name="Sano S."/>
            <person name="Moriya S."/>
            <person name="Momiyama H."/>
            <person name="Satoh N."/>
            <person name="Takami S."/>
            <person name="Terashima Y."/>
            <person name="Suzuki O."/>
            <person name="Nakagawa S."/>
            <person name="Senoh A."/>
            <person name="Mizoguchi H."/>
            <person name="Goto Y."/>
            <person name="Shimizu F."/>
            <person name="Wakebe H."/>
            <person name="Hishigaki H."/>
            <person name="Watanabe T."/>
            <person name="Sugiyama A."/>
            <person name="Takemoto M."/>
            <person name="Kawakami B."/>
            <person name="Yamazaki M."/>
            <person name="Watanabe K."/>
            <person name="Kumagai A."/>
            <person name="Itakura S."/>
            <person name="Fukuzumi Y."/>
            <person name="Fujimori Y."/>
            <person name="Komiyama M."/>
            <person name="Tashiro H."/>
            <person name="Tanigami A."/>
            <person name="Fujiwara T."/>
            <person name="Ono T."/>
            <person name="Yamada K."/>
            <person name="Fujii Y."/>
            <person name="Ozaki K."/>
            <person name="Hirao M."/>
            <person name="Ohmori Y."/>
            <person name="Kawabata A."/>
            <person name="Hikiji T."/>
            <person name="Kobatake N."/>
            <person name="Inagaki H."/>
            <person name="Ikema Y."/>
            <person name="Okamoto S."/>
            <person name="Okitani R."/>
            <person name="Kawakami T."/>
            <person name="Noguchi S."/>
            <person name="Itoh T."/>
            <person name="Shigeta K."/>
            <person name="Senba T."/>
            <person name="Matsumura K."/>
            <person name="Nakajima Y."/>
            <person name="Mizuno T."/>
            <person name="Morinaga M."/>
            <person name="Sasaki M."/>
            <person name="Togashi T."/>
            <person name="Oyama M."/>
            <person name="Hata H."/>
            <person name="Watanabe M."/>
            <person name="Komatsu T."/>
            <person name="Mizushima-Sugano J."/>
            <person name="Satoh T."/>
            <person name="Shirai Y."/>
            <person name="Takahashi Y."/>
            <person name="Nakagawa K."/>
            <person name="Okumura K."/>
            <person name="Nagase T."/>
            <person name="Nomura N."/>
            <person name="Kikuchi H."/>
            <person name="Masuho Y."/>
            <person name="Yamashita R."/>
            <person name="Nakai K."/>
            <person name="Yada T."/>
            <person name="Nakamura Y."/>
            <person name="Ohara O."/>
            <person name="Isogai T."/>
            <person name="Sugano S."/>
        </authorList>
    </citation>
    <scope>NUCLEOTIDE SEQUENCE [LARGE SCALE MRNA] (ISOFORM 1)</scope>
    <scope>VARIANT LEU-118</scope>
    <source>
        <tissue>Testis</tissue>
    </source>
</reference>
<reference key="3">
    <citation type="journal article" date="2004" name="Nature">
        <title>DNA sequence and analysis of human chromosome 9.</title>
        <authorList>
            <person name="Humphray S.J."/>
            <person name="Oliver K."/>
            <person name="Hunt A.R."/>
            <person name="Plumb R.W."/>
            <person name="Loveland J.E."/>
            <person name="Howe K.L."/>
            <person name="Andrews T.D."/>
            <person name="Searle S."/>
            <person name="Hunt S.E."/>
            <person name="Scott C.E."/>
            <person name="Jones M.C."/>
            <person name="Ainscough R."/>
            <person name="Almeida J.P."/>
            <person name="Ambrose K.D."/>
            <person name="Ashwell R.I.S."/>
            <person name="Babbage A.K."/>
            <person name="Babbage S."/>
            <person name="Bagguley C.L."/>
            <person name="Bailey J."/>
            <person name="Banerjee R."/>
            <person name="Barker D.J."/>
            <person name="Barlow K.F."/>
            <person name="Bates K."/>
            <person name="Beasley H."/>
            <person name="Beasley O."/>
            <person name="Bird C.P."/>
            <person name="Bray-Allen S."/>
            <person name="Brown A.J."/>
            <person name="Brown J.Y."/>
            <person name="Burford D."/>
            <person name="Burrill W."/>
            <person name="Burton J."/>
            <person name="Carder C."/>
            <person name="Carter N.P."/>
            <person name="Chapman J.C."/>
            <person name="Chen Y."/>
            <person name="Clarke G."/>
            <person name="Clark S.Y."/>
            <person name="Clee C.M."/>
            <person name="Clegg S."/>
            <person name="Collier R.E."/>
            <person name="Corby N."/>
            <person name="Crosier M."/>
            <person name="Cummings A.T."/>
            <person name="Davies J."/>
            <person name="Dhami P."/>
            <person name="Dunn M."/>
            <person name="Dutta I."/>
            <person name="Dyer L.W."/>
            <person name="Earthrowl M.E."/>
            <person name="Faulkner L."/>
            <person name="Fleming C.J."/>
            <person name="Frankish A."/>
            <person name="Frankland J.A."/>
            <person name="French L."/>
            <person name="Fricker D.G."/>
            <person name="Garner P."/>
            <person name="Garnett J."/>
            <person name="Ghori J."/>
            <person name="Gilbert J.G.R."/>
            <person name="Glison C."/>
            <person name="Grafham D.V."/>
            <person name="Gribble S."/>
            <person name="Griffiths C."/>
            <person name="Griffiths-Jones S."/>
            <person name="Grocock R."/>
            <person name="Guy J."/>
            <person name="Hall R.E."/>
            <person name="Hammond S."/>
            <person name="Harley J.L."/>
            <person name="Harrison E.S.I."/>
            <person name="Hart E.A."/>
            <person name="Heath P.D."/>
            <person name="Henderson C.D."/>
            <person name="Hopkins B.L."/>
            <person name="Howard P.J."/>
            <person name="Howden P.J."/>
            <person name="Huckle E."/>
            <person name="Johnson C."/>
            <person name="Johnson D."/>
            <person name="Joy A.A."/>
            <person name="Kay M."/>
            <person name="Keenan S."/>
            <person name="Kershaw J.K."/>
            <person name="Kimberley A.M."/>
            <person name="King A."/>
            <person name="Knights A."/>
            <person name="Laird G.K."/>
            <person name="Langford C."/>
            <person name="Lawlor S."/>
            <person name="Leongamornlert D.A."/>
            <person name="Leversha M."/>
            <person name="Lloyd C."/>
            <person name="Lloyd D.M."/>
            <person name="Lovell J."/>
            <person name="Martin S."/>
            <person name="Mashreghi-Mohammadi M."/>
            <person name="Matthews L."/>
            <person name="McLaren S."/>
            <person name="McLay K.E."/>
            <person name="McMurray A."/>
            <person name="Milne S."/>
            <person name="Nickerson T."/>
            <person name="Nisbett J."/>
            <person name="Nordsiek G."/>
            <person name="Pearce A.V."/>
            <person name="Peck A.I."/>
            <person name="Porter K.M."/>
            <person name="Pandian R."/>
            <person name="Pelan S."/>
            <person name="Phillimore B."/>
            <person name="Povey S."/>
            <person name="Ramsey Y."/>
            <person name="Rand V."/>
            <person name="Scharfe M."/>
            <person name="Sehra H.K."/>
            <person name="Shownkeen R."/>
            <person name="Sims S.K."/>
            <person name="Skuce C.D."/>
            <person name="Smith M."/>
            <person name="Steward C.A."/>
            <person name="Swarbreck D."/>
            <person name="Sycamore N."/>
            <person name="Tester J."/>
            <person name="Thorpe A."/>
            <person name="Tracey A."/>
            <person name="Tromans A."/>
            <person name="Thomas D.W."/>
            <person name="Wall M."/>
            <person name="Wallis J.M."/>
            <person name="West A.P."/>
            <person name="Whitehead S.L."/>
            <person name="Willey D.L."/>
            <person name="Williams S.A."/>
            <person name="Wilming L."/>
            <person name="Wray P.W."/>
            <person name="Young L."/>
            <person name="Ashurst J.L."/>
            <person name="Coulson A."/>
            <person name="Blocker H."/>
            <person name="Durbin R.M."/>
            <person name="Sulston J.E."/>
            <person name="Hubbard T."/>
            <person name="Jackson M.J."/>
            <person name="Bentley D.R."/>
            <person name="Beck S."/>
            <person name="Rogers J."/>
            <person name="Dunham I."/>
        </authorList>
    </citation>
    <scope>NUCLEOTIDE SEQUENCE [LARGE SCALE GENOMIC DNA]</scope>
</reference>
<reference key="4">
    <citation type="journal article" date="2004" name="Genome Res.">
        <title>The status, quality, and expansion of the NIH full-length cDNA project: the Mammalian Gene Collection (MGC).</title>
        <authorList>
            <consortium name="The MGC Project Team"/>
        </authorList>
    </citation>
    <scope>NUCLEOTIDE SEQUENCE [LARGE SCALE MRNA] (ISOFORMS 2 AND 3)</scope>
    <scope>VARIANT LEU-118</scope>
    <source>
        <tissue>Brain</tissue>
        <tissue>Testis</tissue>
    </source>
</reference>
<proteinExistence type="evidence at protein level"/>
<accession>Q96J77</accession>
<accession>Q5TCR3</accession>
<accession>Q5TCR4</accession>
<accession>Q5TCR5</accession>
<accession>Q8N4P5</accession>
<accession>Q8WWF7</accession>
<accession>Q96M09</accession>
<protein>
    <recommendedName>
        <fullName>Tumor protein D55</fullName>
        <shortName>hD55</shortName>
    </recommendedName>
    <alternativeName>
        <fullName>Testis development protein NYD-SP25</fullName>
    </alternativeName>
    <alternativeName>
        <fullName>Tumor protein D52-like 3</fullName>
    </alternativeName>
</protein>
<comment type="subunit">
    <text evidence="5">Interacts with TPD52L2.</text>
</comment>
<comment type="interaction">
    <interactant intactId="EBI-932162">
        <id>Q96J77</id>
    </interactant>
    <interactant intactId="EBI-741181">
        <id>Q6RW13</id>
        <label>AGTRAP</label>
    </interactant>
    <organismsDiffer>false</organismsDiffer>
    <experiments>3</experiments>
</comment>
<comment type="interaction">
    <interactant intactId="EBI-932162">
        <id>Q96J77</id>
    </interactant>
    <interactant intactId="EBI-2548702">
        <id>Q96DZ9</id>
        <label>CMTM5</label>
    </interactant>
    <organismsDiffer>false</organismsDiffer>
    <experiments>3</experiments>
</comment>
<comment type="interaction">
    <interactant intactId="EBI-932162">
        <id>Q96J77</id>
    </interactant>
    <interactant intactId="EBI-717470">
        <id>Q16890</id>
        <label>TPD52L1</label>
    </interactant>
    <organismsDiffer>false</organismsDiffer>
    <experiments>3</experiments>
</comment>
<comment type="alternative products">
    <event type="alternative splicing"/>
    <isoform>
        <id>Q96J77-1</id>
        <name>1</name>
        <sequence type="displayed"/>
    </isoform>
    <isoform>
        <id>Q96J77-2</id>
        <name>2</name>
        <sequence type="described" ref="VSP_027114"/>
    </isoform>
    <isoform>
        <id>Q96J77-3</id>
        <name>3</name>
        <sequence type="described" ref="VSP_027113"/>
    </isoform>
</comment>
<comment type="tissue specificity">
    <text evidence="5">Specifically expressed in testis. Expressed at 5.6-fold higher levels in adult testis than in fetal testis.</text>
</comment>
<comment type="similarity">
    <text evidence="7">Belongs to the TPD52 family.</text>
</comment>
<name>TPD55_HUMAN</name>
<dbReference type="EMBL" id="AY032877">
    <property type="protein sequence ID" value="AAK66820.1"/>
    <property type="molecule type" value="mRNA"/>
</dbReference>
<dbReference type="EMBL" id="AK057479">
    <property type="protein sequence ID" value="BAB71505.1"/>
    <property type="molecule type" value="mRNA"/>
</dbReference>
<dbReference type="EMBL" id="AL133480">
    <property type="status" value="NOT_ANNOTATED_CDS"/>
    <property type="molecule type" value="Genomic_DNA"/>
</dbReference>
<dbReference type="EMBL" id="BC017589">
    <property type="protein sequence ID" value="AAH17589.1"/>
    <property type="molecule type" value="mRNA"/>
</dbReference>
<dbReference type="EMBL" id="BC033792">
    <property type="protein sequence ID" value="AAH33792.1"/>
    <property type="molecule type" value="mRNA"/>
</dbReference>
<dbReference type="EMBL" id="BC042113">
    <property type="protein sequence ID" value="AAH42113.1"/>
    <property type="molecule type" value="mRNA"/>
</dbReference>
<dbReference type="CCDS" id="CCDS34984.1">
    <molecule id="Q96J77-2"/>
</dbReference>
<dbReference type="CCDS" id="CCDS34985.1">
    <molecule id="Q96J77-3"/>
</dbReference>
<dbReference type="CCDS" id="CCDS34986.1">
    <molecule id="Q96J77-1"/>
</dbReference>
<dbReference type="RefSeq" id="NP_001001874.2">
    <molecule id="Q96J77-2"/>
    <property type="nucleotide sequence ID" value="NM_001001874.3"/>
</dbReference>
<dbReference type="RefSeq" id="NP_001001875.2">
    <molecule id="Q96J77-3"/>
    <property type="nucleotide sequence ID" value="NM_001001875.4"/>
</dbReference>
<dbReference type="RefSeq" id="NP_277051.3">
    <molecule id="Q96J77-1"/>
    <property type="nucleotide sequence ID" value="NM_033516.5"/>
</dbReference>
<dbReference type="RefSeq" id="XP_016870769.1">
    <molecule id="Q96J77-3"/>
    <property type="nucleotide sequence ID" value="XM_017015280.3"/>
</dbReference>
<dbReference type="RefSeq" id="XP_054220117.1">
    <molecule id="Q96J77-3"/>
    <property type="nucleotide sequence ID" value="XM_054364142.1"/>
</dbReference>
<dbReference type="SMR" id="Q96J77"/>
<dbReference type="BioGRID" id="124633">
    <property type="interactions" value="17"/>
</dbReference>
<dbReference type="FunCoup" id="Q96J77">
    <property type="interactions" value="96"/>
</dbReference>
<dbReference type="IntAct" id="Q96J77">
    <property type="interactions" value="14"/>
</dbReference>
<dbReference type="STRING" id="9606.ENSP00000341677"/>
<dbReference type="GlyGen" id="Q96J77">
    <property type="glycosylation" value="1 site, 1 O-linked glycan (1 site)"/>
</dbReference>
<dbReference type="iPTMnet" id="Q96J77"/>
<dbReference type="PhosphoSitePlus" id="Q96J77"/>
<dbReference type="BioMuta" id="TPD52L3"/>
<dbReference type="DMDM" id="313104031"/>
<dbReference type="MassIVE" id="Q96J77"/>
<dbReference type="PaxDb" id="9606-ENSP00000341677"/>
<dbReference type="PeptideAtlas" id="Q96J77"/>
<dbReference type="ProteomicsDB" id="76893">
    <molecule id="Q96J77-1"/>
</dbReference>
<dbReference type="ProteomicsDB" id="76894">
    <molecule id="Q96J77-2"/>
</dbReference>
<dbReference type="ProteomicsDB" id="76895">
    <molecule id="Q96J77-3"/>
</dbReference>
<dbReference type="Antibodypedia" id="9681">
    <property type="antibodies" value="300 antibodies from 24 providers"/>
</dbReference>
<dbReference type="DNASU" id="89882"/>
<dbReference type="Ensembl" id="ENST00000314556.4">
    <molecule id="Q96J77-2"/>
    <property type="protein sequence ID" value="ENSP00000318665.3"/>
    <property type="gene ID" value="ENSG00000170777.11"/>
</dbReference>
<dbReference type="Ensembl" id="ENST00000344545.6">
    <molecule id="Q96J77-1"/>
    <property type="protein sequence ID" value="ENSP00000341677.5"/>
    <property type="gene ID" value="ENSG00000170777.11"/>
</dbReference>
<dbReference type="Ensembl" id="ENST00000381428.1">
    <molecule id="Q96J77-3"/>
    <property type="protein sequence ID" value="ENSP00000370836.1"/>
    <property type="gene ID" value="ENSG00000170777.11"/>
</dbReference>
<dbReference type="GeneID" id="89882"/>
<dbReference type="KEGG" id="hsa:89882"/>
<dbReference type="MANE-Select" id="ENST00000314556.4">
    <molecule id="Q96J77-2"/>
    <property type="protein sequence ID" value="ENSP00000318665.3"/>
    <property type="RefSeq nucleotide sequence ID" value="NM_001001874.3"/>
    <property type="RefSeq protein sequence ID" value="NP_001001874.2"/>
</dbReference>
<dbReference type="UCSC" id="uc003zjv.4">
    <molecule id="Q96J77-1"/>
    <property type="organism name" value="human"/>
</dbReference>
<dbReference type="AGR" id="HGNC:23382"/>
<dbReference type="CTD" id="89882"/>
<dbReference type="DisGeNET" id="89882"/>
<dbReference type="GeneCards" id="TPD52L3"/>
<dbReference type="HGNC" id="HGNC:23382">
    <property type="gene designation" value="TPD52L3"/>
</dbReference>
<dbReference type="HPA" id="ENSG00000170777">
    <property type="expression patterns" value="Tissue enriched (testis)"/>
</dbReference>
<dbReference type="MIM" id="617567">
    <property type="type" value="gene"/>
</dbReference>
<dbReference type="neXtProt" id="NX_Q96J77"/>
<dbReference type="OpenTargets" id="ENSG00000170777"/>
<dbReference type="PharmGKB" id="PA142670712"/>
<dbReference type="VEuPathDB" id="HostDB:ENSG00000170777"/>
<dbReference type="eggNOG" id="KOG4010">
    <property type="taxonomic scope" value="Eukaryota"/>
</dbReference>
<dbReference type="GeneTree" id="ENSGT00940000163110"/>
<dbReference type="HOGENOM" id="CLU_080743_1_1_1"/>
<dbReference type="InParanoid" id="Q96J77"/>
<dbReference type="OMA" id="KHMLNQG"/>
<dbReference type="OrthoDB" id="10000687at2759"/>
<dbReference type="PAN-GO" id="Q96J77">
    <property type="GO annotations" value="1 GO annotation based on evolutionary models"/>
</dbReference>
<dbReference type="PhylomeDB" id="Q96J77"/>
<dbReference type="TreeFam" id="TF317562"/>
<dbReference type="PathwayCommons" id="Q96J77"/>
<dbReference type="SignaLink" id="Q96J77"/>
<dbReference type="BioGRID-ORCS" id="89882">
    <property type="hits" value="9 hits in 1141 CRISPR screens"/>
</dbReference>
<dbReference type="GenomeRNAi" id="89882"/>
<dbReference type="Pharos" id="Q96J77">
    <property type="development level" value="Tdark"/>
</dbReference>
<dbReference type="PRO" id="PR:Q96J77"/>
<dbReference type="Proteomes" id="UP000005640">
    <property type="component" value="Chromosome 9"/>
</dbReference>
<dbReference type="RNAct" id="Q96J77">
    <property type="molecule type" value="protein"/>
</dbReference>
<dbReference type="Bgee" id="ENSG00000170777">
    <property type="expression patterns" value="Expressed in sperm and 46 other cell types or tissues"/>
</dbReference>
<dbReference type="GO" id="GO:0005737">
    <property type="term" value="C:cytoplasm"/>
    <property type="evidence" value="ECO:0000318"/>
    <property type="project" value="GO_Central"/>
</dbReference>
<dbReference type="InterPro" id="IPR007327">
    <property type="entry name" value="TPD52"/>
</dbReference>
<dbReference type="PANTHER" id="PTHR19307">
    <property type="entry name" value="TUMOR PROTEIN D52"/>
    <property type="match status" value="1"/>
</dbReference>
<dbReference type="PANTHER" id="PTHR19307:SF5">
    <property type="entry name" value="TUMOR PROTEIN D55"/>
    <property type="match status" value="1"/>
</dbReference>
<dbReference type="Pfam" id="PF04201">
    <property type="entry name" value="TPD52"/>
    <property type="match status" value="1"/>
</dbReference>
<gene>
    <name type="primary">TPD52L3</name>
</gene>
<keyword id="KW-0025">Alternative splicing</keyword>
<keyword id="KW-0175">Coiled coil</keyword>
<keyword id="KW-1267">Proteomics identification</keyword>
<keyword id="KW-1185">Reference proteome</keyword>
<sequence length="140" mass="15503">MPHARTETSVGTYESHSTSELEDLTEPEQRELKTKLTKLEAEIVTLRHVLAAKERRCGELKRKLGLTALVGLRQNLSKSWLDVQVSNTYVKQKTSAALSTMGTLICRKLGGVKKSATFRSFEGLMGTIKSKVSGGKRAWP</sequence>
<organism>
    <name type="scientific">Homo sapiens</name>
    <name type="common">Human</name>
    <dbReference type="NCBI Taxonomy" id="9606"/>
    <lineage>
        <taxon>Eukaryota</taxon>
        <taxon>Metazoa</taxon>
        <taxon>Chordata</taxon>
        <taxon>Craniata</taxon>
        <taxon>Vertebrata</taxon>
        <taxon>Euteleostomi</taxon>
        <taxon>Mammalia</taxon>
        <taxon>Eutheria</taxon>
        <taxon>Euarchontoglires</taxon>
        <taxon>Primates</taxon>
        <taxon>Haplorrhini</taxon>
        <taxon>Catarrhini</taxon>
        <taxon>Hominidae</taxon>
        <taxon>Homo</taxon>
    </lineage>
</organism>